<keyword id="KW-0496">Mitochondrion</keyword>
<keyword id="KW-1185">Reference proteome</keyword>
<accession>P92548</accession>
<accession>Q1ZXW8</accession>
<dbReference type="EMBL" id="Y08501">
    <property type="protein sequence ID" value="CAA69801.1"/>
    <property type="molecule type" value="Genomic_DNA"/>
</dbReference>
<dbReference type="EMBL" id="BK010421">
    <property type="status" value="NOT_ANNOTATED_CDS"/>
    <property type="molecule type" value="Genomic_DNA"/>
</dbReference>
<dbReference type="EMBL" id="AC007730">
    <property type="status" value="NOT_ANNOTATED_CDS"/>
    <property type="molecule type" value="Genomic_DNA"/>
</dbReference>
<dbReference type="RefSeq" id="NP_085570.1">
    <property type="nucleotide sequence ID" value="NC_001284.2"/>
</dbReference>
<dbReference type="STRING" id="3702.P92548"/>
<dbReference type="PaxDb" id="3702-ATMG01180.1"/>
<dbReference type="EnsemblPlants" id="ATMG01180.1">
    <property type="protein sequence ID" value="ATMG01180.1"/>
    <property type="gene ID" value="ATMG01180"/>
</dbReference>
<dbReference type="Gramene" id="ATMG01180.1">
    <property type="protein sequence ID" value="ATMG01180.1"/>
    <property type="gene ID" value="ATMG01180"/>
</dbReference>
<dbReference type="Araport" id="ATMG01180"/>
<dbReference type="TAIR" id="ATMG01180">
    <property type="gene designation" value="ORF111B"/>
</dbReference>
<dbReference type="HOGENOM" id="CLU_2161893_0_0_1"/>
<dbReference type="InParanoid" id="P92548"/>
<dbReference type="PRO" id="PR:P92548"/>
<dbReference type="Proteomes" id="UP000006548">
    <property type="component" value="Mitochondrion MT"/>
</dbReference>
<dbReference type="GO" id="GO:0005739">
    <property type="term" value="C:mitochondrion"/>
    <property type="evidence" value="ECO:0007669"/>
    <property type="project" value="UniProtKB-SubCell"/>
</dbReference>
<proteinExistence type="predicted"/>
<gene>
    <name type="ordered locus">AtMg01180</name>
</gene>
<comment type="subcellular location">
    <subcellularLocation>
        <location evidence="1">Mitochondrion</location>
    </subcellularLocation>
</comment>
<comment type="miscellaneous">
    <text>A stretch of 270 kb of the mitochondrial genome is duplicated within the centromere of chromosome 2 resulting in the duplication of the gene. The expression of the duplicated gene is not demonstrated.</text>
</comment>
<comment type="sequence caution" evidence="1">
    <conflict type="frameshift">
        <sequence resource="EMBL" id="AC007730"/>
    </conflict>
</comment>
<feature type="chain" id="PRO_0000196815" description="Uncharacterized mitochondrial protein AtMg01180">
    <location>
        <begin position="1"/>
        <end position="111"/>
    </location>
</feature>
<reference key="1">
    <citation type="journal article" date="1997" name="Nat. Genet.">
        <title>The mitochondrial genome of Arabidopsis thaliana contains 57 genes in 366,924 nucleotides.</title>
        <authorList>
            <person name="Unseld M."/>
            <person name="Marienfeld J.R."/>
            <person name="Brandt P."/>
            <person name="Brennicke A."/>
        </authorList>
    </citation>
    <scope>NUCLEOTIDE SEQUENCE [LARGE SCALE GENOMIC DNA]</scope>
    <source>
        <strain>cv. C24</strain>
    </source>
</reference>
<reference key="2">
    <citation type="journal article" date="2018" name="Plant Cell">
        <title>Correction of persistent errors in Arabidopsis reference mitochondrial genomes.</title>
        <authorList>
            <person name="Sloan D.B."/>
            <person name="Wu Z."/>
            <person name="Sharbrough J."/>
        </authorList>
    </citation>
    <scope>NUCLEOTIDE SEQUENCE [LARGE SCALE GENOMIC DNA]</scope>
    <source>
        <strain>cv. Columbia</strain>
    </source>
</reference>
<reference key="3">
    <citation type="journal article" date="1999" name="Nature">
        <title>Sequence and analysis of chromosome 2 of the plant Arabidopsis thaliana.</title>
        <authorList>
            <person name="Lin X."/>
            <person name="Kaul S."/>
            <person name="Rounsley S.D."/>
            <person name="Shea T.P."/>
            <person name="Benito M.-I."/>
            <person name="Town C.D."/>
            <person name="Fujii C.Y."/>
            <person name="Mason T.M."/>
            <person name="Bowman C.L."/>
            <person name="Barnstead M.E."/>
            <person name="Feldblyum T.V."/>
            <person name="Buell C.R."/>
            <person name="Ketchum K.A."/>
            <person name="Lee J.J."/>
            <person name="Ronning C.M."/>
            <person name="Koo H.L."/>
            <person name="Moffat K.S."/>
            <person name="Cronin L.A."/>
            <person name="Shen M."/>
            <person name="Pai G."/>
            <person name="Van Aken S."/>
            <person name="Umayam L."/>
            <person name="Tallon L.J."/>
            <person name="Gill J.E."/>
            <person name="Adams M.D."/>
            <person name="Carrera A.J."/>
            <person name="Creasy T.H."/>
            <person name="Goodman H.M."/>
            <person name="Somerville C.R."/>
            <person name="Copenhaver G.P."/>
            <person name="Preuss D."/>
            <person name="Nierman W.C."/>
            <person name="White O."/>
            <person name="Eisen J.A."/>
            <person name="Salzberg S.L."/>
            <person name="Fraser C.M."/>
            <person name="Venter J.C."/>
        </authorList>
    </citation>
    <scope>NUCLEOTIDE SEQUENCE [LARGE SCALE GENOMIC DNA]</scope>
    <source>
        <strain>cv. Columbia</strain>
    </source>
</reference>
<geneLocation type="mitochondrion"/>
<evidence type="ECO:0000305" key="1"/>
<name>M1180_ARATH</name>
<protein>
    <recommendedName>
        <fullName>Uncharacterized mitochondrial protein AtMg01180</fullName>
    </recommendedName>
    <alternativeName>
        <fullName>ORF111b</fullName>
    </alternativeName>
</protein>
<sequence>MMTLFTQEPSFSIKCLPTTPSKPHRSLLAARLLFLSISDFSCRCPKIKLSLKGYRFIYCVRVVPSPSSLAKAQSDRLNIGLIRRSLKLCCARDIRLELGQVLISIPLLLFL</sequence>
<organism>
    <name type="scientific">Arabidopsis thaliana</name>
    <name type="common">Mouse-ear cress</name>
    <dbReference type="NCBI Taxonomy" id="3702"/>
    <lineage>
        <taxon>Eukaryota</taxon>
        <taxon>Viridiplantae</taxon>
        <taxon>Streptophyta</taxon>
        <taxon>Embryophyta</taxon>
        <taxon>Tracheophyta</taxon>
        <taxon>Spermatophyta</taxon>
        <taxon>Magnoliopsida</taxon>
        <taxon>eudicotyledons</taxon>
        <taxon>Gunneridae</taxon>
        <taxon>Pentapetalae</taxon>
        <taxon>rosids</taxon>
        <taxon>malvids</taxon>
        <taxon>Brassicales</taxon>
        <taxon>Brassicaceae</taxon>
        <taxon>Camelineae</taxon>
        <taxon>Arabidopsis</taxon>
    </lineage>
</organism>